<name>DKC1_DROME</name>
<gene>
    <name evidence="13 18" type="primary">Nop60B</name>
    <name evidence="11 18" type="synonym">mfl</name>
    <name evidence="18" type="ORF">CG3333</name>
</gene>
<comment type="function">
    <text evidence="5 6 9 14">Catalytic subunit of the box H/ACA small nucleolar ribonucleoprotein (H/ACA snoRNP) complex, which catalyzes pseudouridylation of rRNA (PubMed:10087258, PubMed:37343092). This involves the isomerization of uridine such that the ribose is subsequently attached to C5, instead of the normal N1 (Probable). Pseudouridine ('psi') residues may serve to stabilize the conformation of rRNAs (Probable). Required for ribosome biogenesis; plays a central role in ribosomal RNA processing (PubMed:10087258, PubMed:37343092). H/ACA snoRNP complex-dependent ribosome biogenesis is important in female germline cell differentiation during oogenesis (PubMed:37343092). Essential for viability and female fertility (PubMed:10087258). Required for maintenance of the germline stem cell lineage during spermatogenesis (PubMed:12645924).</text>
</comment>
<comment type="catalytic activity">
    <reaction>
        <text>a uridine in RNA = a pseudouridine in RNA</text>
        <dbReference type="Rhea" id="RHEA:48348"/>
        <dbReference type="Rhea" id="RHEA-COMP:12068"/>
        <dbReference type="Rhea" id="RHEA-COMP:12069"/>
        <dbReference type="ChEBI" id="CHEBI:65314"/>
        <dbReference type="ChEBI" id="CHEBI:65315"/>
    </reaction>
</comment>
<comment type="subunit">
    <text evidence="16">Component of the box H/ACA small nucleolar ribonucleoprotein (H/ACA snoRNP) complex consisting of Nop60B, Gar1, NPH2 and Nop10, and associated with H/ACA-type snoRNAs.</text>
</comment>
<comment type="subcellular location">
    <subcellularLocation>
        <location evidence="5 9 10">Nucleus</location>
        <location evidence="5 9 10">Nucleolus</location>
    </subcellularLocation>
</comment>
<comment type="alternative products">
    <event type="alternative splicing"/>
    <isoform>
        <id>O44081-1</id>
        <name evidence="18">A</name>
        <name evidence="18">B</name>
        <name evidence="18">C</name>
        <name evidence="18">F</name>
        <name evidence="12">MFL</name>
        <sequence type="displayed"/>
    </isoform>
    <isoform>
        <id>O44081-2</id>
        <name evidence="12 17">MFLalpha</name>
        <sequence type="described" ref="VSP_036583 VSP_036584"/>
    </isoform>
    <text evidence="5 7">A number of isoforms are produced (PubMed:10087258, PubMed:17328797). The canonical isoform (isoform A) is expressed from multiple alternatively spliced mRNAs, some of which are more highly expressed in females than in males (PubMed:10087258).</text>
</comment>
<comment type="tissue specificity">
    <molecule>Isoform A</molecule>
    <text evidence="7">Expressed at higher levels in females than in males.</text>
</comment>
<comment type="tissue specificity">
    <molecule>Isoform MFLalpha</molecule>
    <text evidence="7">Expressed almost exclusively in females with high levels of expression in the ovary.</text>
</comment>
<comment type="developmental stage">
    <text evidence="5 9 10">During oogenesis expression increases from the cyst stage to early egg chambers (at protein level) (PubMed:37343092). Expressed in germline cells during oogenesis (PubMed:9829824). Highly expressed in embryos (PubMed:10087258). In adults expression is higher in females than in males (PubMed:10087258).</text>
</comment>
<comment type="disruption phenotype">
    <text evidence="9 10">Embryonic to larval lethal (PubMed:9829824). RNAi-mediated knockdown in female germline cells results in a cyst differentiation defect that prevents progression from the 8-cell cyst stage and oocyte differentiation (PubMed:37343092).</text>
</comment>
<comment type="miscellaneous">
    <text evidence="15">The name minifly was chosen to reflect the strong reduction in body size of heterozygous mutant flies.</text>
</comment>
<comment type="similarity">
    <text evidence="14">Belongs to the pseudouridine synthase TruB family.</text>
</comment>
<comment type="sequence caution" evidence="14">
    <conflict type="erroneous initiation">
        <sequence resource="EMBL-CDS" id="ABV82369"/>
    </conflict>
</comment>
<feature type="chain" id="PRO_0000121989" description="H/ACA ribonucleoprotein complex subunit 4">
    <location>
        <begin position="1"/>
        <end position="508"/>
    </location>
</feature>
<feature type="domain" description="PUA" evidence="3">
    <location>
        <begin position="294"/>
        <end position="369"/>
    </location>
</feature>
<feature type="region of interest" description="Disordered" evidence="4">
    <location>
        <begin position="1"/>
        <end position="29"/>
    </location>
</feature>
<feature type="region of interest" description="Disordered" evidence="4">
    <location>
        <begin position="423"/>
        <end position="508"/>
    </location>
</feature>
<feature type="compositionally biased region" description="Low complexity" evidence="4">
    <location>
        <begin position="442"/>
        <end position="457"/>
    </location>
</feature>
<feature type="compositionally biased region" description="Acidic residues" evidence="4">
    <location>
        <begin position="475"/>
        <end position="485"/>
    </location>
</feature>
<feature type="compositionally biased region" description="Basic and acidic residues" evidence="4">
    <location>
        <begin position="499"/>
        <end position="508"/>
    </location>
</feature>
<feature type="active site" description="Nucleophile" evidence="2">
    <location>
        <position position="123"/>
    </location>
</feature>
<feature type="modified residue" description="Phosphoserine" evidence="8">
    <location>
        <position position="442"/>
    </location>
</feature>
<feature type="modified residue" description="Phosphothreonine" evidence="8">
    <location>
        <position position="443"/>
    </location>
</feature>
<feature type="modified residue" description="Phosphoserine" evidence="8">
    <location>
        <position position="444"/>
    </location>
</feature>
<feature type="modified residue" description="Phosphoserine" evidence="8">
    <location>
        <position position="445"/>
    </location>
</feature>
<feature type="modified residue" description="Phosphothreonine" evidence="8">
    <location>
        <position position="449"/>
    </location>
</feature>
<feature type="modified residue" description="Phosphoserine" evidence="8">
    <location>
        <position position="455"/>
    </location>
</feature>
<feature type="modified residue" description="Phosphothreonine" evidence="8">
    <location>
        <position position="458"/>
    </location>
</feature>
<feature type="splice variant" id="VSP_036583" description="In isoform MFLalpha." evidence="12">
    <original>GVFWVSCEAGSYIRTMCVHLGLVLGVGGQMLELRRVRSGIQS</original>
    <variation>DLLIRSCNIWTITLIKEISSKIFLKIIECHRNLKSSHDTLLR</variation>
    <location>
        <begin position="212"/>
        <end position="253"/>
    </location>
</feature>
<feature type="splice variant" id="VSP_036584" description="In isoform MFLalpha." evidence="12">
    <location>
        <begin position="254"/>
        <end position="508"/>
    </location>
</feature>
<feature type="sequence conflict" description="In Ref. 2; AAD19897." evidence="14" ref="2">
    <original>P</original>
    <variation>R</variation>
    <location>
        <position position="69"/>
    </location>
</feature>
<accession>O44081</accession>
<accession>A8E745</accession>
<accession>Q0GLB4</accession>
<accession>Q0MVP1</accession>
<accession>Q8T408</accession>
<accession>Q9UAN8</accession>
<accession>Q9V3Z5</accession>
<sequence length="508" mass="56831">MADVEVRKEKKKKKIKEEPLDGDDIGTLQKQGNFQIKPSSKIAELDTSQWPLLLKNFDKLNIRSNHYTPLAHGSSPLNRDIKEYMKTGFINLDKPSNPSSHEVVAWIKKILKVEKTGHSGTLDPKVTGCLIVCIDRATRLVKSQQSAGKEYVAIFKLHGAVESVAKVRQGLEKLRGALFQRPPLISAVKRQLRVRTVYDSKLLDYDETRNMGVFWVSCEAGSYIRTMCVHLGLVLGVGGQMLELRRVRSGIQSERDGMVTMHDVLDAMWLYENHKDESMLRRVIKPLEGLLVNHKRIIMKDSSVNAVCYGAKITLPGVLRYEDGIEIDQEIVICTTKGEAICLAIALMTTATMASCDHGVVAKIKRVIMERDTYPRKWGLGPKASAKKALIAAGKLDKFGRPNENTPKEWLTGYVDYNAKKPAAQEVSPTNGSSEPSKRKLSTSSVEETAAAAVSEETPSKDKKKKKKKHKGDEEAPEAAEEEAEPVEKEKKKKKKKDKDRDRDEAQE</sequence>
<organism evidence="19">
    <name type="scientific">Drosophila melanogaster</name>
    <name type="common">Fruit fly</name>
    <dbReference type="NCBI Taxonomy" id="7227"/>
    <lineage>
        <taxon>Eukaryota</taxon>
        <taxon>Metazoa</taxon>
        <taxon>Ecdysozoa</taxon>
        <taxon>Arthropoda</taxon>
        <taxon>Hexapoda</taxon>
        <taxon>Insecta</taxon>
        <taxon>Pterygota</taxon>
        <taxon>Neoptera</taxon>
        <taxon>Endopterygota</taxon>
        <taxon>Diptera</taxon>
        <taxon>Brachycera</taxon>
        <taxon>Muscomorpha</taxon>
        <taxon>Ephydroidea</taxon>
        <taxon>Drosophilidae</taxon>
        <taxon>Drosophila</taxon>
        <taxon>Sophophora</taxon>
    </lineage>
</organism>
<dbReference type="EC" id="5.4.99.-" evidence="1"/>
<dbReference type="EMBL" id="AF017230">
    <property type="protein sequence ID" value="AAC97117.1"/>
    <property type="molecule type" value="mRNA"/>
</dbReference>
<dbReference type="EMBL" id="AF089837">
    <property type="protein sequence ID" value="AAD16092.1"/>
    <property type="molecule type" value="mRNA"/>
</dbReference>
<dbReference type="EMBL" id="AF097634">
    <property type="protein sequence ID" value="AAD19897.1"/>
    <property type="molecule type" value="Genomic_DNA"/>
</dbReference>
<dbReference type="EMBL" id="DQ841550">
    <property type="protein sequence ID" value="ABH08965.1"/>
    <property type="molecule type" value="mRNA"/>
</dbReference>
<dbReference type="EMBL" id="DQ857345">
    <property type="protein sequence ID" value="ABI17547.1"/>
    <property type="molecule type" value="mRNA"/>
</dbReference>
<dbReference type="EMBL" id="DQ857346">
    <property type="protein sequence ID" value="ABI17548.1"/>
    <property type="molecule type" value="mRNA"/>
</dbReference>
<dbReference type="EMBL" id="AE013599">
    <property type="protein sequence ID" value="AAF47178.1"/>
    <property type="molecule type" value="Genomic_DNA"/>
</dbReference>
<dbReference type="EMBL" id="AE013599">
    <property type="protein sequence ID" value="AAX52682.1"/>
    <property type="molecule type" value="Genomic_DNA"/>
</dbReference>
<dbReference type="EMBL" id="AY089408">
    <property type="protein sequence ID" value="AAL90146.1"/>
    <property type="molecule type" value="mRNA"/>
</dbReference>
<dbReference type="EMBL" id="BT030987">
    <property type="protein sequence ID" value="ABV82369.1"/>
    <property type="status" value="ALT_INIT"/>
    <property type="molecule type" value="mRNA"/>
</dbReference>
<dbReference type="RefSeq" id="NP_001014547.1">
    <molecule id="O44081-1"/>
    <property type="nucleotide sequence ID" value="NM_001014547.4"/>
</dbReference>
<dbReference type="RefSeq" id="NP_001163286.1">
    <molecule id="O44081-1"/>
    <property type="nucleotide sequence ID" value="NM_001169815.3"/>
</dbReference>
<dbReference type="RefSeq" id="NP_001163289.1">
    <molecule id="O44081-1"/>
    <property type="nucleotide sequence ID" value="NM_001169818.3"/>
</dbReference>
<dbReference type="RefSeq" id="NP_525120.1">
    <molecule id="O44081-1"/>
    <property type="nucleotide sequence ID" value="NM_080381.5"/>
</dbReference>
<dbReference type="SMR" id="O44081"/>
<dbReference type="BioGRID" id="63449">
    <property type="interactions" value="12"/>
</dbReference>
<dbReference type="ComplexPortal" id="CPX-2675">
    <property type="entry name" value="Box H/ACA ribonucleoprotein complex"/>
</dbReference>
<dbReference type="DIP" id="DIP-20128N"/>
<dbReference type="FunCoup" id="O44081">
    <property type="interactions" value="2009"/>
</dbReference>
<dbReference type="IntAct" id="O44081">
    <property type="interactions" value="71"/>
</dbReference>
<dbReference type="STRING" id="7227.FBpp0290083"/>
<dbReference type="iPTMnet" id="O44081"/>
<dbReference type="PaxDb" id="7227-FBpp0099583"/>
<dbReference type="EnsemblMetazoa" id="FBtr0072258">
    <molecule id="O44081-1"/>
    <property type="protein sequence ID" value="FBpp0072166"/>
    <property type="gene ID" value="FBgn0259937"/>
</dbReference>
<dbReference type="EnsemblMetazoa" id="FBtr0100213">
    <molecule id="O44081-1"/>
    <property type="protein sequence ID" value="FBpp0099583"/>
    <property type="gene ID" value="FBgn0259937"/>
</dbReference>
<dbReference type="EnsemblMetazoa" id="FBtr0300227">
    <molecule id="O44081-1"/>
    <property type="protein sequence ID" value="FBpp0289464"/>
    <property type="gene ID" value="FBgn0259937"/>
</dbReference>
<dbReference type="EnsemblMetazoa" id="FBtr0300861">
    <molecule id="O44081-1"/>
    <property type="protein sequence ID" value="FBpp0290083"/>
    <property type="gene ID" value="FBgn0259937"/>
</dbReference>
<dbReference type="GeneID" id="37873"/>
<dbReference type="KEGG" id="dme:Dmel_CG3333"/>
<dbReference type="UCSC" id="CG3333-RB">
    <property type="organism name" value="d. melanogaster"/>
</dbReference>
<dbReference type="AGR" id="FB:FBgn0259937"/>
<dbReference type="CTD" id="37873"/>
<dbReference type="FlyBase" id="FBgn0259937">
    <property type="gene designation" value="Nop60B"/>
</dbReference>
<dbReference type="VEuPathDB" id="VectorBase:FBgn0259937"/>
<dbReference type="eggNOG" id="KOG2529">
    <property type="taxonomic scope" value="Eukaryota"/>
</dbReference>
<dbReference type="GeneTree" id="ENSGT00510000047092"/>
<dbReference type="HOGENOM" id="CLU_032087_3_2_1"/>
<dbReference type="InParanoid" id="O44081"/>
<dbReference type="OMA" id="KYGRTNE"/>
<dbReference type="OrthoDB" id="10250002at2759"/>
<dbReference type="PhylomeDB" id="O44081"/>
<dbReference type="Reactome" id="R-DME-171319">
    <property type="pathway name" value="Telomere Extension By Telomerase"/>
</dbReference>
<dbReference type="SignaLink" id="O44081"/>
<dbReference type="BioGRID-ORCS" id="37873">
    <property type="hits" value="0 hits in 1 CRISPR screen"/>
</dbReference>
<dbReference type="ChiTaRS" id="Nop60B">
    <property type="organism name" value="fly"/>
</dbReference>
<dbReference type="GenomeRNAi" id="37873"/>
<dbReference type="PRO" id="PR:O44081"/>
<dbReference type="Proteomes" id="UP000000803">
    <property type="component" value="Chromosome 2R"/>
</dbReference>
<dbReference type="Bgee" id="FBgn0259937">
    <property type="expression patterns" value="Expressed in enteroblast (Drosophila) in digestive tract and 172 other cell types or tissues"/>
</dbReference>
<dbReference type="ExpressionAtlas" id="O44081">
    <property type="expression patterns" value="baseline and differential"/>
</dbReference>
<dbReference type="GO" id="GO:0031429">
    <property type="term" value="C:box H/ACA snoRNP complex"/>
    <property type="evidence" value="ECO:0000318"/>
    <property type="project" value="GO_Central"/>
</dbReference>
<dbReference type="GO" id="GO:0005730">
    <property type="term" value="C:nucleolus"/>
    <property type="evidence" value="ECO:0000314"/>
    <property type="project" value="FlyBase"/>
</dbReference>
<dbReference type="GO" id="GO:0009982">
    <property type="term" value="F:pseudouridine synthase activity"/>
    <property type="evidence" value="ECO:0000318"/>
    <property type="project" value="GO_Central"/>
</dbReference>
<dbReference type="GO" id="GO:0003723">
    <property type="term" value="F:RNA binding"/>
    <property type="evidence" value="ECO:0007669"/>
    <property type="project" value="UniProtKB-KW"/>
</dbReference>
<dbReference type="GO" id="GO:0000495">
    <property type="term" value="P:box H/ACA sno(s)RNA 3'-end processing"/>
    <property type="evidence" value="ECO:0000318"/>
    <property type="project" value="GO_Central"/>
</dbReference>
<dbReference type="GO" id="GO:0007281">
    <property type="term" value="P:germ cell development"/>
    <property type="evidence" value="ECO:0000315"/>
    <property type="project" value="FlyBase"/>
</dbReference>
<dbReference type="GO" id="GO:1990481">
    <property type="term" value="P:mRNA pseudouridine synthesis"/>
    <property type="evidence" value="ECO:0000318"/>
    <property type="project" value="GO_Central"/>
</dbReference>
<dbReference type="GO" id="GO:0001522">
    <property type="term" value="P:pseudouridine synthesis"/>
    <property type="evidence" value="ECO:0000315"/>
    <property type="project" value="FlyBase"/>
</dbReference>
<dbReference type="GO" id="GO:0042254">
    <property type="term" value="P:ribosome biogenesis"/>
    <property type="evidence" value="ECO:0000315"/>
    <property type="project" value="FlyBase"/>
</dbReference>
<dbReference type="GO" id="GO:0006364">
    <property type="term" value="P:rRNA processing"/>
    <property type="evidence" value="ECO:0000315"/>
    <property type="project" value="FlyBase"/>
</dbReference>
<dbReference type="GO" id="GO:0031118">
    <property type="term" value="P:rRNA pseudouridine synthesis"/>
    <property type="evidence" value="ECO:0000318"/>
    <property type="project" value="GO_Central"/>
</dbReference>
<dbReference type="GO" id="GO:0031120">
    <property type="term" value="P:snRNA pseudouridine synthesis"/>
    <property type="evidence" value="ECO:0000318"/>
    <property type="project" value="GO_Central"/>
</dbReference>
<dbReference type="GO" id="GO:0035220">
    <property type="term" value="P:wing disc development"/>
    <property type="evidence" value="ECO:0000315"/>
    <property type="project" value="FlyBase"/>
</dbReference>
<dbReference type="CDD" id="cd02572">
    <property type="entry name" value="PseudoU_synth_hDyskerin"/>
    <property type="match status" value="1"/>
</dbReference>
<dbReference type="CDD" id="cd21148">
    <property type="entry name" value="PUA_Cbf5"/>
    <property type="match status" value="1"/>
</dbReference>
<dbReference type="FunFam" id="3.30.2350.10:FF:000001">
    <property type="entry name" value="H/ACA ribonucleoprotein complex subunit CBF5"/>
    <property type="match status" value="1"/>
</dbReference>
<dbReference type="Gene3D" id="3.30.2350.10">
    <property type="entry name" value="Pseudouridine synthase"/>
    <property type="match status" value="1"/>
</dbReference>
<dbReference type="Gene3D" id="2.30.130.10">
    <property type="entry name" value="PUA domain"/>
    <property type="match status" value="1"/>
</dbReference>
<dbReference type="InterPro" id="IPR012960">
    <property type="entry name" value="Dyskerin-like"/>
</dbReference>
<dbReference type="InterPro" id="IPR020103">
    <property type="entry name" value="PsdUridine_synth_cat_dom_sf"/>
</dbReference>
<dbReference type="InterPro" id="IPR002501">
    <property type="entry name" value="PsdUridine_synth_N"/>
</dbReference>
<dbReference type="InterPro" id="IPR002478">
    <property type="entry name" value="PUA"/>
</dbReference>
<dbReference type="InterPro" id="IPR015947">
    <property type="entry name" value="PUA-like_sf"/>
</dbReference>
<dbReference type="InterPro" id="IPR036974">
    <property type="entry name" value="PUA_sf"/>
</dbReference>
<dbReference type="InterPro" id="IPR004802">
    <property type="entry name" value="tRNA_PsdUridine_synth_B_fam"/>
</dbReference>
<dbReference type="InterPro" id="IPR032819">
    <property type="entry name" value="TruB_C"/>
</dbReference>
<dbReference type="NCBIfam" id="TIGR00425">
    <property type="entry name" value="CBF5"/>
    <property type="match status" value="1"/>
</dbReference>
<dbReference type="NCBIfam" id="NF003280">
    <property type="entry name" value="PRK04270.1"/>
    <property type="match status" value="1"/>
</dbReference>
<dbReference type="PANTHER" id="PTHR23127">
    <property type="entry name" value="CENTROMERE/MICROTUBULE BINDING PROTEIN CBF5"/>
    <property type="match status" value="1"/>
</dbReference>
<dbReference type="PANTHER" id="PTHR23127:SF0">
    <property type="entry name" value="H_ACA RIBONUCLEOPROTEIN COMPLEX SUBUNIT DKC1"/>
    <property type="match status" value="1"/>
</dbReference>
<dbReference type="Pfam" id="PF08068">
    <property type="entry name" value="DKCLD"/>
    <property type="match status" value="1"/>
</dbReference>
<dbReference type="Pfam" id="PF01472">
    <property type="entry name" value="PUA"/>
    <property type="match status" value="1"/>
</dbReference>
<dbReference type="Pfam" id="PF16198">
    <property type="entry name" value="TruB_C_2"/>
    <property type="match status" value="1"/>
</dbReference>
<dbReference type="Pfam" id="PF01509">
    <property type="entry name" value="TruB_N"/>
    <property type="match status" value="1"/>
</dbReference>
<dbReference type="SMART" id="SM01136">
    <property type="entry name" value="DKCLD"/>
    <property type="match status" value="1"/>
</dbReference>
<dbReference type="SMART" id="SM00359">
    <property type="entry name" value="PUA"/>
    <property type="match status" value="1"/>
</dbReference>
<dbReference type="SUPFAM" id="SSF55120">
    <property type="entry name" value="Pseudouridine synthase"/>
    <property type="match status" value="1"/>
</dbReference>
<dbReference type="SUPFAM" id="SSF88697">
    <property type="entry name" value="PUA domain-like"/>
    <property type="match status" value="1"/>
</dbReference>
<dbReference type="PROSITE" id="PS50890">
    <property type="entry name" value="PUA"/>
    <property type="match status" value="1"/>
</dbReference>
<reference key="1">
    <citation type="journal article" date="1998" name="Mol. Gen. Genet.">
        <title>The Nop60B gene of Drosophila encodes an essential nucleolar protein that functions in yeast.</title>
        <authorList>
            <person name="Phillips B."/>
            <person name="Billin A.N."/>
            <person name="Cadwell C."/>
            <person name="Buchholz R."/>
            <person name="Erickson C."/>
            <person name="Merriam J.R."/>
            <person name="Carbon J."/>
            <person name="Poole S.J."/>
        </authorList>
    </citation>
    <scope>NUCLEOTIDE SEQUENCE [MRNA] (ISOFORM A)</scope>
    <scope>SUBCELLULAR LOCATION</scope>
    <scope>DEVELOPMENTAL STAGE</scope>
    <scope>DISRUPTION PHENOTYPE</scope>
</reference>
<reference key="2">
    <citation type="journal article" date="1999" name="J. Cell Biol.">
        <title>minifly, a Drosophila gene required for ribosome biogenesis.</title>
        <authorList>
            <person name="Giordano E."/>
            <person name="Peluso I."/>
            <person name="Senger S."/>
            <person name="Furia M."/>
        </authorList>
    </citation>
    <scope>NUCLEOTIDE SEQUENCE [GENOMIC DNA / MRNA] (ISOFORM A)</scope>
    <scope>FUNCTION</scope>
    <scope>ALTERNATIVE SPLICING</scope>
    <scope>SUBCELLULAR LOCATION</scope>
    <scope>DEVELOPMENTAL STAGE</scope>
</reference>
<reference key="3">
    <citation type="journal article" date="2007" name="BMC Mol. Biol.">
        <title>The coding/non-coding overlapping architecture of the gene encoding the Drosophila pseudouridine synthase.</title>
        <authorList>
            <person name="Riccardo S."/>
            <person name="Tortoriello G."/>
            <person name="Giordano E."/>
            <person name="Turano M."/>
            <person name="Furia M."/>
        </authorList>
    </citation>
    <scope>NUCLEOTIDE SEQUENCE [MRNA] (ISOFORMS A AND MFLALPHA)</scope>
    <scope>TISSUE SPECIFICITY</scope>
</reference>
<reference key="4">
    <citation type="journal article" date="2000" name="Science">
        <title>The genome sequence of Drosophila melanogaster.</title>
        <authorList>
            <person name="Adams M.D."/>
            <person name="Celniker S.E."/>
            <person name="Holt R.A."/>
            <person name="Evans C.A."/>
            <person name="Gocayne J.D."/>
            <person name="Amanatides P.G."/>
            <person name="Scherer S.E."/>
            <person name="Li P.W."/>
            <person name="Hoskins R.A."/>
            <person name="Galle R.F."/>
            <person name="George R.A."/>
            <person name="Lewis S.E."/>
            <person name="Richards S."/>
            <person name="Ashburner M."/>
            <person name="Henderson S.N."/>
            <person name="Sutton G.G."/>
            <person name="Wortman J.R."/>
            <person name="Yandell M.D."/>
            <person name="Zhang Q."/>
            <person name="Chen L.X."/>
            <person name="Brandon R.C."/>
            <person name="Rogers Y.-H.C."/>
            <person name="Blazej R.G."/>
            <person name="Champe M."/>
            <person name="Pfeiffer B.D."/>
            <person name="Wan K.H."/>
            <person name="Doyle C."/>
            <person name="Baxter E.G."/>
            <person name="Helt G."/>
            <person name="Nelson C.R."/>
            <person name="Miklos G.L.G."/>
            <person name="Abril J.F."/>
            <person name="Agbayani A."/>
            <person name="An H.-J."/>
            <person name="Andrews-Pfannkoch C."/>
            <person name="Baldwin D."/>
            <person name="Ballew R.M."/>
            <person name="Basu A."/>
            <person name="Baxendale J."/>
            <person name="Bayraktaroglu L."/>
            <person name="Beasley E.M."/>
            <person name="Beeson K.Y."/>
            <person name="Benos P.V."/>
            <person name="Berman B.P."/>
            <person name="Bhandari D."/>
            <person name="Bolshakov S."/>
            <person name="Borkova D."/>
            <person name="Botchan M.R."/>
            <person name="Bouck J."/>
            <person name="Brokstein P."/>
            <person name="Brottier P."/>
            <person name="Burtis K.C."/>
            <person name="Busam D.A."/>
            <person name="Butler H."/>
            <person name="Cadieu E."/>
            <person name="Center A."/>
            <person name="Chandra I."/>
            <person name="Cherry J.M."/>
            <person name="Cawley S."/>
            <person name="Dahlke C."/>
            <person name="Davenport L.B."/>
            <person name="Davies P."/>
            <person name="de Pablos B."/>
            <person name="Delcher A."/>
            <person name="Deng Z."/>
            <person name="Mays A.D."/>
            <person name="Dew I."/>
            <person name="Dietz S.M."/>
            <person name="Dodson K."/>
            <person name="Doup L.E."/>
            <person name="Downes M."/>
            <person name="Dugan-Rocha S."/>
            <person name="Dunkov B.C."/>
            <person name="Dunn P."/>
            <person name="Durbin K.J."/>
            <person name="Evangelista C.C."/>
            <person name="Ferraz C."/>
            <person name="Ferriera S."/>
            <person name="Fleischmann W."/>
            <person name="Fosler C."/>
            <person name="Gabrielian A.E."/>
            <person name="Garg N.S."/>
            <person name="Gelbart W.M."/>
            <person name="Glasser K."/>
            <person name="Glodek A."/>
            <person name="Gong F."/>
            <person name="Gorrell J.H."/>
            <person name="Gu Z."/>
            <person name="Guan P."/>
            <person name="Harris M."/>
            <person name="Harris N.L."/>
            <person name="Harvey D.A."/>
            <person name="Heiman T.J."/>
            <person name="Hernandez J.R."/>
            <person name="Houck J."/>
            <person name="Hostin D."/>
            <person name="Houston K.A."/>
            <person name="Howland T.J."/>
            <person name="Wei M.-H."/>
            <person name="Ibegwam C."/>
            <person name="Jalali M."/>
            <person name="Kalush F."/>
            <person name="Karpen G.H."/>
            <person name="Ke Z."/>
            <person name="Kennison J.A."/>
            <person name="Ketchum K.A."/>
            <person name="Kimmel B.E."/>
            <person name="Kodira C.D."/>
            <person name="Kraft C.L."/>
            <person name="Kravitz S."/>
            <person name="Kulp D."/>
            <person name="Lai Z."/>
            <person name="Lasko P."/>
            <person name="Lei Y."/>
            <person name="Levitsky A.A."/>
            <person name="Li J.H."/>
            <person name="Li Z."/>
            <person name="Liang Y."/>
            <person name="Lin X."/>
            <person name="Liu X."/>
            <person name="Mattei B."/>
            <person name="McIntosh T.C."/>
            <person name="McLeod M.P."/>
            <person name="McPherson D."/>
            <person name="Merkulov G."/>
            <person name="Milshina N.V."/>
            <person name="Mobarry C."/>
            <person name="Morris J."/>
            <person name="Moshrefi A."/>
            <person name="Mount S.M."/>
            <person name="Moy M."/>
            <person name="Murphy B."/>
            <person name="Murphy L."/>
            <person name="Muzny D.M."/>
            <person name="Nelson D.L."/>
            <person name="Nelson D.R."/>
            <person name="Nelson K.A."/>
            <person name="Nixon K."/>
            <person name="Nusskern D.R."/>
            <person name="Pacleb J.M."/>
            <person name="Palazzolo M."/>
            <person name="Pittman G.S."/>
            <person name="Pan S."/>
            <person name="Pollard J."/>
            <person name="Puri V."/>
            <person name="Reese M.G."/>
            <person name="Reinert K."/>
            <person name="Remington K."/>
            <person name="Saunders R.D.C."/>
            <person name="Scheeler F."/>
            <person name="Shen H."/>
            <person name="Shue B.C."/>
            <person name="Siden-Kiamos I."/>
            <person name="Simpson M."/>
            <person name="Skupski M.P."/>
            <person name="Smith T.J."/>
            <person name="Spier E."/>
            <person name="Spradling A.C."/>
            <person name="Stapleton M."/>
            <person name="Strong R."/>
            <person name="Sun E."/>
            <person name="Svirskas R."/>
            <person name="Tector C."/>
            <person name="Turner R."/>
            <person name="Venter E."/>
            <person name="Wang A.H."/>
            <person name="Wang X."/>
            <person name="Wang Z.-Y."/>
            <person name="Wassarman D.A."/>
            <person name="Weinstock G.M."/>
            <person name="Weissenbach J."/>
            <person name="Williams S.M."/>
            <person name="Woodage T."/>
            <person name="Worley K.C."/>
            <person name="Wu D."/>
            <person name="Yang S."/>
            <person name="Yao Q.A."/>
            <person name="Ye J."/>
            <person name="Yeh R.-F."/>
            <person name="Zaveri J.S."/>
            <person name="Zhan M."/>
            <person name="Zhang G."/>
            <person name="Zhao Q."/>
            <person name="Zheng L."/>
            <person name="Zheng X.H."/>
            <person name="Zhong F.N."/>
            <person name="Zhong W."/>
            <person name="Zhou X."/>
            <person name="Zhu S.C."/>
            <person name="Zhu X."/>
            <person name="Smith H.O."/>
            <person name="Gibbs R.A."/>
            <person name="Myers E.W."/>
            <person name="Rubin G.M."/>
            <person name="Venter J.C."/>
        </authorList>
    </citation>
    <scope>NUCLEOTIDE SEQUENCE [LARGE SCALE GENOMIC DNA]</scope>
    <source>
        <strain>Berkeley</strain>
    </source>
</reference>
<reference key="5">
    <citation type="journal article" date="2002" name="Genome Biol.">
        <title>Annotation of the Drosophila melanogaster euchromatic genome: a systematic review.</title>
        <authorList>
            <person name="Misra S."/>
            <person name="Crosby M.A."/>
            <person name="Mungall C.J."/>
            <person name="Matthews B.B."/>
            <person name="Campbell K.S."/>
            <person name="Hradecky P."/>
            <person name="Huang Y."/>
            <person name="Kaminker J.S."/>
            <person name="Millburn G.H."/>
            <person name="Prochnik S.E."/>
            <person name="Smith C.D."/>
            <person name="Tupy J.L."/>
            <person name="Whitfield E.J."/>
            <person name="Bayraktaroglu L."/>
            <person name="Berman B.P."/>
            <person name="Bettencourt B.R."/>
            <person name="Celniker S.E."/>
            <person name="de Grey A.D.N.J."/>
            <person name="Drysdale R.A."/>
            <person name="Harris N.L."/>
            <person name="Richter J."/>
            <person name="Russo S."/>
            <person name="Schroeder A.J."/>
            <person name="Shu S.Q."/>
            <person name="Stapleton M."/>
            <person name="Yamada C."/>
            <person name="Ashburner M."/>
            <person name="Gelbart W.M."/>
            <person name="Rubin G.M."/>
            <person name="Lewis S.E."/>
        </authorList>
    </citation>
    <scope>GENOME REANNOTATION</scope>
    <source>
        <strain>Berkeley</strain>
    </source>
</reference>
<reference key="6">
    <citation type="journal article" date="2002" name="Genome Biol.">
        <title>A Drosophila full-length cDNA resource.</title>
        <authorList>
            <person name="Stapleton M."/>
            <person name="Carlson J.W."/>
            <person name="Brokstein P."/>
            <person name="Yu C."/>
            <person name="Champe M."/>
            <person name="George R.A."/>
            <person name="Guarin H."/>
            <person name="Kronmiller B."/>
            <person name="Pacleb J.M."/>
            <person name="Park S."/>
            <person name="Wan K.H."/>
            <person name="Rubin G.M."/>
            <person name="Celniker S.E."/>
        </authorList>
    </citation>
    <scope>NUCLEOTIDE SEQUENCE [LARGE SCALE MRNA] OF 1-468 (ISOFORM A)</scope>
    <source>
        <strain>Berkeley</strain>
        <tissue>Testis</tissue>
    </source>
</reference>
<reference key="7">
    <citation type="submission" date="2007-10" db="EMBL/GenBank/DDBJ databases">
        <authorList>
            <person name="Stapleton M."/>
            <person name="Carlson J.W."/>
            <person name="Frise E."/>
            <person name="Kapadia B."/>
            <person name="Park S."/>
            <person name="Wan K.H."/>
            <person name="Yu C."/>
            <person name="Celniker S.E."/>
        </authorList>
    </citation>
    <scope>NUCLEOTIDE SEQUENCE [LARGE SCALE MRNA] OF 1-468 (ISOFORM A)</scope>
    <source>
        <strain>Berkeley</strain>
        <tissue>Embryo</tissue>
    </source>
</reference>
<reference key="8">
    <citation type="journal article" date="2003" name="Dev. Biol.">
        <title>Mutations in Nop60B, the Drosophila homolog of human dyskeratosis congenita 1, affect the maintenance of the germ-line stem cell lineage during spermatogenesis.</title>
        <authorList>
            <person name="Kauffman T."/>
            <person name="Tran J."/>
            <person name="DiNardo S."/>
        </authorList>
    </citation>
    <scope>FUNCTION</scope>
</reference>
<reference key="9">
    <citation type="journal article" date="2008" name="J. Proteome Res.">
        <title>Phosphoproteome analysis of Drosophila melanogaster embryos.</title>
        <authorList>
            <person name="Zhai B."/>
            <person name="Villen J."/>
            <person name="Beausoleil S.A."/>
            <person name="Mintseris J."/>
            <person name="Gygi S.P."/>
        </authorList>
    </citation>
    <scope>PHOSPHORYLATION [LARGE SCALE ANALYSIS] AT SER-442; THR-443; SER-444; SER-445; THR-449; SER-455 AND THR-458</scope>
    <scope>IDENTIFICATION BY MASS SPECTROMETRY</scope>
    <source>
        <tissue>Embryo</tissue>
    </source>
</reference>
<reference key="10">
    <citation type="journal article" date="2023" name="Sci. Adv.">
        <title>H/ACA snRNP-dependent ribosome biogenesis regulates translation of polyglutamine proteins.</title>
        <authorList>
            <person name="Breznak S.M."/>
            <person name="Peng Y."/>
            <person name="Deng L."/>
            <person name="Kotb N.M."/>
            <person name="Flamholz Z."/>
            <person name="Rapisarda I.T."/>
            <person name="Martin E.T."/>
            <person name="LaBarge K.A."/>
            <person name="Fabris D."/>
            <person name="Gavis E.R."/>
            <person name="Rangan P."/>
        </authorList>
    </citation>
    <scope>FUNCTION</scope>
    <scope>SUBUNIT</scope>
    <scope>SUBCELLULAR LOCATION</scope>
    <scope>DEVELOPMENTAL STAGE</scope>
    <scope>DISRUPTION PHENOTYPE</scope>
</reference>
<evidence type="ECO:0000250" key="1">
    <source>
        <dbReference type="UniProtKB" id="O60832"/>
    </source>
</evidence>
<evidence type="ECO:0000250" key="2">
    <source>
        <dbReference type="UniProtKB" id="P60340"/>
    </source>
</evidence>
<evidence type="ECO:0000255" key="3">
    <source>
        <dbReference type="PROSITE-ProRule" id="PRU00161"/>
    </source>
</evidence>
<evidence type="ECO:0000256" key="4">
    <source>
        <dbReference type="SAM" id="MobiDB-lite"/>
    </source>
</evidence>
<evidence type="ECO:0000269" key="5">
    <source>
    </source>
</evidence>
<evidence type="ECO:0000269" key="6">
    <source>
    </source>
</evidence>
<evidence type="ECO:0000269" key="7">
    <source>
    </source>
</evidence>
<evidence type="ECO:0000269" key="8">
    <source>
    </source>
</evidence>
<evidence type="ECO:0000269" key="9">
    <source>
    </source>
</evidence>
<evidence type="ECO:0000269" key="10">
    <source>
    </source>
</evidence>
<evidence type="ECO:0000303" key="11">
    <source>
    </source>
</evidence>
<evidence type="ECO:0000303" key="12">
    <source>
    </source>
</evidence>
<evidence type="ECO:0000303" key="13">
    <source>
    </source>
</evidence>
<evidence type="ECO:0000305" key="14"/>
<evidence type="ECO:0000305" key="15">
    <source>
    </source>
</evidence>
<evidence type="ECO:0000305" key="16">
    <source>
    </source>
</evidence>
<evidence type="ECO:0000312" key="17">
    <source>
        <dbReference type="EMBL" id="ABI17548.1"/>
    </source>
</evidence>
<evidence type="ECO:0000312" key="18">
    <source>
        <dbReference type="FlyBase" id="FBgn0259937"/>
    </source>
</evidence>
<evidence type="ECO:0000312" key="19">
    <source>
        <dbReference type="Proteomes" id="UP000000803"/>
    </source>
</evidence>
<keyword id="KW-0025">Alternative splicing</keyword>
<keyword id="KW-0413">Isomerase</keyword>
<keyword id="KW-0539">Nucleus</keyword>
<keyword id="KW-0597">Phosphoprotein</keyword>
<keyword id="KW-1185">Reference proteome</keyword>
<keyword id="KW-0687">Ribonucleoprotein</keyword>
<keyword id="KW-0690">Ribosome biogenesis</keyword>
<keyword id="KW-0694">RNA-binding</keyword>
<keyword id="KW-0698">rRNA processing</keyword>
<proteinExistence type="evidence at protein level"/>
<protein>
    <recommendedName>
        <fullName evidence="14">H/ACA ribonucleoprotein complex subunit 4</fullName>
        <ecNumber evidence="1">5.4.99.-</ecNumber>
    </recommendedName>
    <alternativeName>
        <fullName evidence="18">Nucleolar protein at 60B</fullName>
    </alternativeName>
    <alternativeName>
        <fullName evidence="11 18">Protein minifly</fullName>
    </alternativeName>
</protein>